<dbReference type="EMBL" id="AK033594">
    <property type="protein sequence ID" value="BAC28378.1"/>
    <property type="molecule type" value="mRNA"/>
</dbReference>
<dbReference type="EMBL" id="AL732597">
    <property type="status" value="NOT_ANNOTATED_CDS"/>
    <property type="molecule type" value="Genomic_DNA"/>
</dbReference>
<dbReference type="EMBL" id="BC061228">
    <property type="protein sequence ID" value="AAH61228.1"/>
    <property type="molecule type" value="mRNA"/>
</dbReference>
<dbReference type="CCDS" id="CCDS18360.1"/>
<dbReference type="RefSeq" id="NP_001343210.1">
    <property type="nucleotide sequence ID" value="NM_001356281.1"/>
</dbReference>
<dbReference type="RefSeq" id="NP_780514.1">
    <property type="nucleotide sequence ID" value="NM_175305.5"/>
</dbReference>
<dbReference type="RefSeq" id="XP_006502677.1">
    <property type="nucleotide sequence ID" value="XM_006502614.4"/>
</dbReference>
<dbReference type="SMR" id="Q8BZT5"/>
<dbReference type="FunCoup" id="Q8BZT5">
    <property type="interactions" value="886"/>
</dbReference>
<dbReference type="STRING" id="10090.ENSMUSP00000102718"/>
<dbReference type="GlyCosmos" id="Q8BZT5">
    <property type="glycosylation" value="11 sites, No reported glycans"/>
</dbReference>
<dbReference type="GlyGen" id="Q8BZT5">
    <property type="glycosylation" value="11 sites"/>
</dbReference>
<dbReference type="PhosphoSitePlus" id="Q8BZT5"/>
<dbReference type="jPOST" id="Q8BZT5"/>
<dbReference type="PaxDb" id="10090-ENSMUSP00000102718"/>
<dbReference type="ProteomicsDB" id="252667"/>
<dbReference type="Antibodypedia" id="2688">
    <property type="antibodies" value="136 antibodies from 24 providers"/>
</dbReference>
<dbReference type="Ensembl" id="ENSMUST00000053419.9">
    <property type="protein sequence ID" value="ENSMUSP00000056094.3"/>
    <property type="gene ID" value="ENSMUSG00000049799.14"/>
</dbReference>
<dbReference type="Ensembl" id="ENSMUST00000107101.2">
    <property type="protein sequence ID" value="ENSMUSP00000102718.2"/>
    <property type="gene ID" value="ENSMUSG00000049799.14"/>
</dbReference>
<dbReference type="GeneID" id="100061"/>
<dbReference type="KEGG" id="mmu:100061"/>
<dbReference type="UCSC" id="uc008tsh.1">
    <property type="organism name" value="mouse"/>
</dbReference>
<dbReference type="AGR" id="MGI:2140219"/>
<dbReference type="CTD" id="64922"/>
<dbReference type="MGI" id="MGI:2140219">
    <property type="gene designation" value="Lrrc19"/>
</dbReference>
<dbReference type="VEuPathDB" id="HostDB:ENSMUSG00000049799"/>
<dbReference type="eggNOG" id="KOG0619">
    <property type="taxonomic scope" value="Eukaryota"/>
</dbReference>
<dbReference type="GeneTree" id="ENSGT00940000161278"/>
<dbReference type="HOGENOM" id="CLU_063696_1_0_1"/>
<dbReference type="InParanoid" id="Q8BZT5"/>
<dbReference type="OMA" id="EVKCNFT"/>
<dbReference type="OrthoDB" id="1394818at2759"/>
<dbReference type="PhylomeDB" id="Q8BZT5"/>
<dbReference type="TreeFam" id="TF335466"/>
<dbReference type="BioGRID-ORCS" id="100061">
    <property type="hits" value="4 hits in 76 CRISPR screens"/>
</dbReference>
<dbReference type="PRO" id="PR:Q8BZT5"/>
<dbReference type="Proteomes" id="UP000000589">
    <property type="component" value="Chromosome 4"/>
</dbReference>
<dbReference type="RNAct" id="Q8BZT5">
    <property type="molecule type" value="protein"/>
</dbReference>
<dbReference type="Bgee" id="ENSMUSG00000049799">
    <property type="expression patterns" value="Expressed in right kidney and 152 other cell types or tissues"/>
</dbReference>
<dbReference type="GO" id="GO:0005886">
    <property type="term" value="C:plasma membrane"/>
    <property type="evidence" value="ECO:0000314"/>
    <property type="project" value="MGI"/>
</dbReference>
<dbReference type="GO" id="GO:0038023">
    <property type="term" value="F:signaling receptor activity"/>
    <property type="evidence" value="ECO:0000314"/>
    <property type="project" value="MGI"/>
</dbReference>
<dbReference type="GO" id="GO:0048874">
    <property type="term" value="P:host-mediated regulation of intestinal microbiota composition"/>
    <property type="evidence" value="ECO:0000315"/>
    <property type="project" value="UniProtKB"/>
</dbReference>
<dbReference type="GO" id="GO:0043123">
    <property type="term" value="P:positive regulation of canonical NF-kappaB signal transduction"/>
    <property type="evidence" value="ECO:0000315"/>
    <property type="project" value="UniProtKB"/>
</dbReference>
<dbReference type="GO" id="GO:1901224">
    <property type="term" value="P:positive regulation of non-canonical NF-kappaB signal transduction"/>
    <property type="evidence" value="ECO:0000314"/>
    <property type="project" value="MGI"/>
</dbReference>
<dbReference type="GO" id="GO:0001817">
    <property type="term" value="P:regulation of cytokine production"/>
    <property type="evidence" value="ECO:0000315"/>
    <property type="project" value="UniProtKB"/>
</dbReference>
<dbReference type="GO" id="GO:0050727">
    <property type="term" value="P:regulation of inflammatory response"/>
    <property type="evidence" value="ECO:0000315"/>
    <property type="project" value="UniProtKB"/>
</dbReference>
<dbReference type="GO" id="GO:0002224">
    <property type="term" value="P:toll-like receptor signaling pathway"/>
    <property type="evidence" value="ECO:0000314"/>
    <property type="project" value="MGI"/>
</dbReference>
<dbReference type="FunFam" id="3.80.10.10:FF:000865">
    <property type="entry name" value="Leucine-rich repeat-containing protein 19"/>
    <property type="match status" value="1"/>
</dbReference>
<dbReference type="Gene3D" id="3.80.10.10">
    <property type="entry name" value="Ribonuclease Inhibitor"/>
    <property type="match status" value="2"/>
</dbReference>
<dbReference type="InterPro" id="IPR000483">
    <property type="entry name" value="Cys-rich_flank_reg_C"/>
</dbReference>
<dbReference type="InterPro" id="IPR001611">
    <property type="entry name" value="Leu-rich_rpt"/>
</dbReference>
<dbReference type="InterPro" id="IPR003591">
    <property type="entry name" value="Leu-rich_rpt_typical-subtyp"/>
</dbReference>
<dbReference type="InterPro" id="IPR032675">
    <property type="entry name" value="LRR_dom_sf"/>
</dbReference>
<dbReference type="PANTHER" id="PTHR31450:SF4">
    <property type="entry name" value="LEUCINE-RICH REPEAT-CONTAINING PROTEIN 19"/>
    <property type="match status" value="1"/>
</dbReference>
<dbReference type="PANTHER" id="PTHR31450">
    <property type="entry name" value="LEUCINE-RICH REPEAT-CONTAINING PROTEIN 19 LRRC19 FAMILY MEMBER"/>
    <property type="match status" value="1"/>
</dbReference>
<dbReference type="Pfam" id="PF15176">
    <property type="entry name" value="LRR19-TM"/>
    <property type="match status" value="1"/>
</dbReference>
<dbReference type="Pfam" id="PF13855">
    <property type="entry name" value="LRR_8"/>
    <property type="match status" value="1"/>
</dbReference>
<dbReference type="SMART" id="SM00369">
    <property type="entry name" value="LRR_TYP"/>
    <property type="match status" value="4"/>
</dbReference>
<dbReference type="SMART" id="SM00082">
    <property type="entry name" value="LRRCT"/>
    <property type="match status" value="1"/>
</dbReference>
<dbReference type="SUPFAM" id="SSF52058">
    <property type="entry name" value="L domain-like"/>
    <property type="match status" value="1"/>
</dbReference>
<protein>
    <recommendedName>
        <fullName evidence="6">Leucine-rich repeat-containing protein 19</fullName>
    </recommendedName>
</protein>
<accession>Q8BZT5</accession>
<accession>B1AWG3</accession>
<accession>Q6P8J1</accession>
<reference key="1">
    <citation type="journal article" date="2005" name="Science">
        <title>The transcriptional landscape of the mammalian genome.</title>
        <authorList>
            <person name="Carninci P."/>
            <person name="Kasukawa T."/>
            <person name="Katayama S."/>
            <person name="Gough J."/>
            <person name="Frith M.C."/>
            <person name="Maeda N."/>
            <person name="Oyama R."/>
            <person name="Ravasi T."/>
            <person name="Lenhard B."/>
            <person name="Wells C."/>
            <person name="Kodzius R."/>
            <person name="Shimokawa K."/>
            <person name="Bajic V.B."/>
            <person name="Brenner S.E."/>
            <person name="Batalov S."/>
            <person name="Forrest A.R."/>
            <person name="Zavolan M."/>
            <person name="Davis M.J."/>
            <person name="Wilming L.G."/>
            <person name="Aidinis V."/>
            <person name="Allen J.E."/>
            <person name="Ambesi-Impiombato A."/>
            <person name="Apweiler R."/>
            <person name="Aturaliya R.N."/>
            <person name="Bailey T.L."/>
            <person name="Bansal M."/>
            <person name="Baxter L."/>
            <person name="Beisel K.W."/>
            <person name="Bersano T."/>
            <person name="Bono H."/>
            <person name="Chalk A.M."/>
            <person name="Chiu K.P."/>
            <person name="Choudhary V."/>
            <person name="Christoffels A."/>
            <person name="Clutterbuck D.R."/>
            <person name="Crowe M.L."/>
            <person name="Dalla E."/>
            <person name="Dalrymple B.P."/>
            <person name="de Bono B."/>
            <person name="Della Gatta G."/>
            <person name="di Bernardo D."/>
            <person name="Down T."/>
            <person name="Engstrom P."/>
            <person name="Fagiolini M."/>
            <person name="Faulkner G."/>
            <person name="Fletcher C.F."/>
            <person name="Fukushima T."/>
            <person name="Furuno M."/>
            <person name="Futaki S."/>
            <person name="Gariboldi M."/>
            <person name="Georgii-Hemming P."/>
            <person name="Gingeras T.R."/>
            <person name="Gojobori T."/>
            <person name="Green R.E."/>
            <person name="Gustincich S."/>
            <person name="Harbers M."/>
            <person name="Hayashi Y."/>
            <person name="Hensch T.K."/>
            <person name="Hirokawa N."/>
            <person name="Hill D."/>
            <person name="Huminiecki L."/>
            <person name="Iacono M."/>
            <person name="Ikeo K."/>
            <person name="Iwama A."/>
            <person name="Ishikawa T."/>
            <person name="Jakt M."/>
            <person name="Kanapin A."/>
            <person name="Katoh M."/>
            <person name="Kawasawa Y."/>
            <person name="Kelso J."/>
            <person name="Kitamura H."/>
            <person name="Kitano H."/>
            <person name="Kollias G."/>
            <person name="Krishnan S.P."/>
            <person name="Kruger A."/>
            <person name="Kummerfeld S.K."/>
            <person name="Kurochkin I.V."/>
            <person name="Lareau L.F."/>
            <person name="Lazarevic D."/>
            <person name="Lipovich L."/>
            <person name="Liu J."/>
            <person name="Liuni S."/>
            <person name="McWilliam S."/>
            <person name="Madan Babu M."/>
            <person name="Madera M."/>
            <person name="Marchionni L."/>
            <person name="Matsuda H."/>
            <person name="Matsuzawa S."/>
            <person name="Miki H."/>
            <person name="Mignone F."/>
            <person name="Miyake S."/>
            <person name="Morris K."/>
            <person name="Mottagui-Tabar S."/>
            <person name="Mulder N."/>
            <person name="Nakano N."/>
            <person name="Nakauchi H."/>
            <person name="Ng P."/>
            <person name="Nilsson R."/>
            <person name="Nishiguchi S."/>
            <person name="Nishikawa S."/>
            <person name="Nori F."/>
            <person name="Ohara O."/>
            <person name="Okazaki Y."/>
            <person name="Orlando V."/>
            <person name="Pang K.C."/>
            <person name="Pavan W.J."/>
            <person name="Pavesi G."/>
            <person name="Pesole G."/>
            <person name="Petrovsky N."/>
            <person name="Piazza S."/>
            <person name="Reed J."/>
            <person name="Reid J.F."/>
            <person name="Ring B.Z."/>
            <person name="Ringwald M."/>
            <person name="Rost B."/>
            <person name="Ruan Y."/>
            <person name="Salzberg S.L."/>
            <person name="Sandelin A."/>
            <person name="Schneider C."/>
            <person name="Schoenbach C."/>
            <person name="Sekiguchi K."/>
            <person name="Semple C.A."/>
            <person name="Seno S."/>
            <person name="Sessa L."/>
            <person name="Sheng Y."/>
            <person name="Shibata Y."/>
            <person name="Shimada H."/>
            <person name="Shimada K."/>
            <person name="Silva D."/>
            <person name="Sinclair B."/>
            <person name="Sperling S."/>
            <person name="Stupka E."/>
            <person name="Sugiura K."/>
            <person name="Sultana R."/>
            <person name="Takenaka Y."/>
            <person name="Taki K."/>
            <person name="Tammoja K."/>
            <person name="Tan S.L."/>
            <person name="Tang S."/>
            <person name="Taylor M.S."/>
            <person name="Tegner J."/>
            <person name="Teichmann S.A."/>
            <person name="Ueda H.R."/>
            <person name="van Nimwegen E."/>
            <person name="Verardo R."/>
            <person name="Wei C.L."/>
            <person name="Yagi K."/>
            <person name="Yamanishi H."/>
            <person name="Zabarovsky E."/>
            <person name="Zhu S."/>
            <person name="Zimmer A."/>
            <person name="Hide W."/>
            <person name="Bult C."/>
            <person name="Grimmond S.M."/>
            <person name="Teasdale R.D."/>
            <person name="Liu E.T."/>
            <person name="Brusic V."/>
            <person name="Quackenbush J."/>
            <person name="Wahlestedt C."/>
            <person name="Mattick J.S."/>
            <person name="Hume D.A."/>
            <person name="Kai C."/>
            <person name="Sasaki D."/>
            <person name="Tomaru Y."/>
            <person name="Fukuda S."/>
            <person name="Kanamori-Katayama M."/>
            <person name="Suzuki M."/>
            <person name="Aoki J."/>
            <person name="Arakawa T."/>
            <person name="Iida J."/>
            <person name="Imamura K."/>
            <person name="Itoh M."/>
            <person name="Kato T."/>
            <person name="Kawaji H."/>
            <person name="Kawagashira N."/>
            <person name="Kawashima T."/>
            <person name="Kojima M."/>
            <person name="Kondo S."/>
            <person name="Konno H."/>
            <person name="Nakano K."/>
            <person name="Ninomiya N."/>
            <person name="Nishio T."/>
            <person name="Okada M."/>
            <person name="Plessy C."/>
            <person name="Shibata K."/>
            <person name="Shiraki T."/>
            <person name="Suzuki S."/>
            <person name="Tagami M."/>
            <person name="Waki K."/>
            <person name="Watahiki A."/>
            <person name="Okamura-Oho Y."/>
            <person name="Suzuki H."/>
            <person name="Kawai J."/>
            <person name="Hayashizaki Y."/>
        </authorList>
    </citation>
    <scope>NUCLEOTIDE SEQUENCE [LARGE SCALE MRNA]</scope>
    <source>
        <strain>C57BL/6J</strain>
        <tissue>Cecum</tissue>
    </source>
</reference>
<reference key="2">
    <citation type="journal article" date="2009" name="PLoS Biol.">
        <title>Lineage-specific biology revealed by a finished genome assembly of the mouse.</title>
        <authorList>
            <person name="Church D.M."/>
            <person name="Goodstadt L."/>
            <person name="Hillier L.W."/>
            <person name="Zody M.C."/>
            <person name="Goldstein S."/>
            <person name="She X."/>
            <person name="Bult C.J."/>
            <person name="Agarwala R."/>
            <person name="Cherry J.L."/>
            <person name="DiCuccio M."/>
            <person name="Hlavina W."/>
            <person name="Kapustin Y."/>
            <person name="Meric P."/>
            <person name="Maglott D."/>
            <person name="Birtle Z."/>
            <person name="Marques A.C."/>
            <person name="Graves T."/>
            <person name="Zhou S."/>
            <person name="Teague B."/>
            <person name="Potamousis K."/>
            <person name="Churas C."/>
            <person name="Place M."/>
            <person name="Herschleb J."/>
            <person name="Runnheim R."/>
            <person name="Forrest D."/>
            <person name="Amos-Landgraf J."/>
            <person name="Schwartz D.C."/>
            <person name="Cheng Z."/>
            <person name="Lindblad-Toh K."/>
            <person name="Eichler E.E."/>
            <person name="Ponting C.P."/>
        </authorList>
    </citation>
    <scope>NUCLEOTIDE SEQUENCE [LARGE SCALE GENOMIC DNA]</scope>
    <source>
        <strain>C57BL/6J</strain>
    </source>
</reference>
<reference key="3">
    <citation type="journal article" date="2004" name="Genome Res.">
        <title>The status, quality, and expansion of the NIH full-length cDNA project: the Mammalian Gene Collection (MGC).</title>
        <authorList>
            <consortium name="The MGC Project Team"/>
        </authorList>
    </citation>
    <scope>NUCLEOTIDE SEQUENCE [LARGE SCALE MRNA]</scope>
    <source>
        <tissue>Kidney</tissue>
    </source>
</reference>
<reference key="4">
    <citation type="journal article" date="2009" name="Biochem. Biophys. Res. Commun.">
        <title>LRRC19, a novel member of the leucine-rich repeat protein family, activates NF-kappaB and induces expression of proinflammatory cytokines.</title>
        <authorList>
            <person name="Chai L."/>
            <person name="Dai L."/>
            <person name="Che Y."/>
            <person name="Xu J."/>
            <person name="Liu G."/>
            <person name="Zhang Z."/>
            <person name="Yang R."/>
        </authorList>
    </citation>
    <scope>FUNCTION</scope>
    <scope>TISSUE SPECIFICITY</scope>
    <scope>ACTIVITY REGULATION</scope>
</reference>
<reference key="5">
    <citation type="journal article" date="2010" name="Cell">
        <title>A tissue-specific atlas of mouse protein phosphorylation and expression.</title>
        <authorList>
            <person name="Huttlin E.L."/>
            <person name="Jedrychowski M.P."/>
            <person name="Elias J.E."/>
            <person name="Goswami T."/>
            <person name="Rad R."/>
            <person name="Beausoleil S.A."/>
            <person name="Villen J."/>
            <person name="Haas W."/>
            <person name="Sowa M.E."/>
            <person name="Gygi S.P."/>
        </authorList>
    </citation>
    <scope>IDENTIFICATION BY MASS SPECTROMETRY [LARGE SCALE ANALYSIS]</scope>
    <source>
        <tissue>Kidney</tissue>
    </source>
</reference>
<reference key="6">
    <citation type="journal article" date="2014" name="Nat. Commun.">
        <title>LRRC19 expressed in the kidney induces TRAF2/6-mediated signals to prevent infection by uropathogenic bacteria.</title>
        <authorList>
            <person name="Su X."/>
            <person name="Min S."/>
            <person name="Cao S."/>
            <person name="Yan H."/>
            <person name="Zhao Y."/>
            <person name="Li H."/>
            <person name="Chai L."/>
            <person name="Mei S."/>
            <person name="Yang J."/>
            <person name="Zhang Y."/>
            <person name="Zhang Z."/>
            <person name="Liu F."/>
            <person name="Sun W."/>
            <person name="Che Y."/>
            <person name="Yang R."/>
        </authorList>
    </citation>
    <scope>FUNCTION</scope>
    <scope>DISRUPTION PHENOTYPE</scope>
    <scope>TISSUE SPECIFICITY</scope>
</reference>
<reference key="7">
    <citation type="journal article" date="2016" name="Cell Rep.">
        <title>The Gut Epithelial Receptor LRRC19 Promotes the Recruitment of Immune Cells and Gut Inflammation.</title>
        <authorList>
            <person name="Cao S."/>
            <person name="Su X."/>
            <person name="Zeng B."/>
            <person name="Yan H."/>
            <person name="Huang Y."/>
            <person name="Wang E."/>
            <person name="Yun H."/>
            <person name="Zhang Y."/>
            <person name="Liu F."/>
            <person name="Li W."/>
            <person name="Wei H."/>
            <person name="Che Y."/>
            <person name="Yang R."/>
        </authorList>
    </citation>
    <scope>FUNCTION</scope>
    <scope>DISRUPTION PHENOTYPE</scope>
    <scope>TISSUE SPECIFICITY</scope>
</reference>
<evidence type="ECO:0000250" key="1">
    <source>
        <dbReference type="UniProtKB" id="Q9H756"/>
    </source>
</evidence>
<evidence type="ECO:0000255" key="2"/>
<evidence type="ECO:0000269" key="3">
    <source>
    </source>
</evidence>
<evidence type="ECO:0000269" key="4">
    <source>
    </source>
</evidence>
<evidence type="ECO:0000269" key="5">
    <source>
    </source>
</evidence>
<evidence type="ECO:0000305" key="6"/>
<evidence type="ECO:0000312" key="7">
    <source>
        <dbReference type="MGI" id="MGI:2140219"/>
    </source>
</evidence>
<comment type="function">
    <text evidence="3 4 5">Pathogen-recognition receptor which mediates the activation of TRAF2- and TRAF6 NF-kappa-B signaling pathways and induces the expression of pro-inflammatory cytokines (PubMed:19679103, PubMed:25026888, PubMed:26776522). In kidney, prevents infection by uropathogenic bacteria by inducing the production of cytokines, chemokines and antimicrobial substances (PubMed:25026888). In gut, involved in host-microbiota interactions, plays a critical role in promoting the recruitment of immune cells and intestinal inflammation (PubMed:26776522).</text>
</comment>
<comment type="activity regulation">
    <text evidence="3">Activated by TLR ligands such as LPS, bacterial DNA and peptidoglycan.</text>
</comment>
<comment type="subunit">
    <text evidence="1">Interacts with TRAF2 and TRAF6.</text>
</comment>
<comment type="subcellular location">
    <subcellularLocation>
        <location evidence="6">Membrane</location>
        <topology evidence="6">Single-pass type I membrane protein</topology>
    </subcellularLocation>
</comment>
<comment type="tissue specificity">
    <text evidence="3 4 5">Strongly expressed in kidney, also expressed in spleen, intestine and colon (PubMed:19679103, PubMed:26776522). Highly expressed in epithelial cells (PubMed:26776522). In kidney, mainly expressed in renal collecting duct epithelial cells (PubMed:25026888).</text>
</comment>
<comment type="disruption phenotype">
    <text evidence="4 5">Knockout mice display increased longevity compared with the cohoused wild-type littermates. Almost all mutant mice remain alive, whereas most of the wild-type mice (&gt;80%) di after 2 years on standard chow. Mutant body weights are lower than those of wild-type. Gut tissues of wild-type mice show slight inflammation whereas mutant mouse gut tissues do not. The gut tissues of mutant mice are more yellow and the colon tissues are thinner in mutant mice than in WT mice and the ceca are enlarged significantly (PubMed:26776522). They show lower expression of cytokines such as TNF, ILB, IL6, IFNG, IL17 and IL12 in the gut tissues (PubMed:26776522). Mice are resistant to dextran sodium sulfate (DSS)-induced colitis and colon cancer (PubMed:26776522). They have fewer and smaller gut tissue-associated lymph node Peyer plaques compared with cohoused wild-type mice with fewer adaptive immune cells that have accumulated in their gut immune systems (PubMed:26776522). Mutants show reduced expression of several chemokines, including CCL6, CCL9, CXCL9, and CXCL10 (PubMed:26776522). They also show an altered gut microbiota and reduced expression of REGs (PubMed:26776522). Mutants are more susceptible to uropathogenic Escherichia coli infections (PubMed:25026888).</text>
</comment>
<gene>
    <name evidence="7" type="primary">Lrrc19</name>
</gene>
<name>LRC19_MOUSE</name>
<sequence length="364" mass="41573">MKVTRFMFWLFSMLLPSVKSQASETEVPCNFSRRNYTLIPEGISTNVTILDLSYNRITLNAADSRVLQMYSLLTELYLMENNIIALYNSSFRNLLNLEILNICGNSISVIQQGSFVGLNELKQLFLCQNKILQLNPDTFVPLNNLKVLNLQGNLIRLFDAPQLPHLEILTLDGNPWNCTCGLLELHNWLNTSNVTLENENMTMCSYPDELKHDSIKSAPFTTECHSTFISTITEDFQSTRNSSFNSSSHNLTWTSEHEPLGKSWAFLVGVVATVLLTSLLIFIAIKCPVWYNILLSYNHHRLEEHEAETYENGLTRNPSSLSQITDTNSEDTTVIFEQLHAFVVDDDGFIEDRYIDINEVHEEK</sequence>
<feature type="signal peptide" evidence="2">
    <location>
        <begin position="1"/>
        <end position="20"/>
    </location>
</feature>
<feature type="chain" id="PRO_0000021611" description="Leucine-rich repeat-containing protein 19">
    <location>
        <begin position="21"/>
        <end position="364"/>
    </location>
</feature>
<feature type="topological domain" description="Extracellular" evidence="2">
    <location>
        <begin position="21"/>
        <end position="264"/>
    </location>
</feature>
<feature type="transmembrane region" description="Helical" evidence="2">
    <location>
        <begin position="265"/>
        <end position="285"/>
    </location>
</feature>
<feature type="topological domain" description="Cytoplasmic" evidence="2">
    <location>
        <begin position="286"/>
        <end position="364"/>
    </location>
</feature>
<feature type="repeat" description="LRR 1" evidence="2">
    <location>
        <begin position="44"/>
        <end position="69"/>
    </location>
</feature>
<feature type="repeat" description="LRR 2" evidence="2">
    <location>
        <begin position="70"/>
        <end position="93"/>
    </location>
</feature>
<feature type="repeat" description="LRR 3" evidence="2">
    <location>
        <begin position="94"/>
        <end position="117"/>
    </location>
</feature>
<feature type="repeat" description="LRR 4" evidence="2">
    <location>
        <begin position="118"/>
        <end position="141"/>
    </location>
</feature>
<feature type="repeat" description="LRR 5" evidence="2">
    <location>
        <begin position="143"/>
        <end position="163"/>
    </location>
</feature>
<feature type="repeat" description="LRR 6" evidence="2">
    <location>
        <begin position="164"/>
        <end position="190"/>
    </location>
</feature>
<feature type="domain" description="LRRCT" evidence="2">
    <location>
        <begin position="174"/>
        <end position="225"/>
    </location>
</feature>
<feature type="glycosylation site" description="N-linked (GlcNAc...) asparagine" evidence="2">
    <location>
        <position position="30"/>
    </location>
</feature>
<feature type="glycosylation site" description="N-linked (GlcNAc...) asparagine" evidence="2">
    <location>
        <position position="35"/>
    </location>
</feature>
<feature type="glycosylation site" description="N-linked (GlcNAc...) asparagine" evidence="2">
    <location>
        <position position="46"/>
    </location>
</feature>
<feature type="glycosylation site" description="N-linked (GlcNAc...) asparagine" evidence="2">
    <location>
        <position position="88"/>
    </location>
</feature>
<feature type="glycosylation site" description="N-linked (GlcNAc...) asparagine" evidence="2">
    <location>
        <position position="177"/>
    </location>
</feature>
<feature type="glycosylation site" description="N-linked (GlcNAc...) asparagine" evidence="2">
    <location>
        <position position="190"/>
    </location>
</feature>
<feature type="glycosylation site" description="N-linked (GlcNAc...) asparagine" evidence="2">
    <location>
        <position position="193"/>
    </location>
</feature>
<feature type="glycosylation site" description="N-linked (GlcNAc...) asparagine" evidence="2">
    <location>
        <position position="200"/>
    </location>
</feature>
<feature type="glycosylation site" description="N-linked (GlcNAc...) asparagine" evidence="2">
    <location>
        <position position="241"/>
    </location>
</feature>
<feature type="glycosylation site" description="N-linked (GlcNAc...) asparagine" evidence="2">
    <location>
        <position position="245"/>
    </location>
</feature>
<feature type="glycosylation site" description="N-linked (GlcNAc...) asparagine" evidence="2">
    <location>
        <position position="250"/>
    </location>
</feature>
<feature type="sequence conflict" description="In Ref. 3; AAH61228." evidence="6" ref="3">
    <original>S</original>
    <variation>G</variation>
    <location>
        <position position="44"/>
    </location>
</feature>
<feature type="sequence conflict" description="In Ref. 3; AAH61228." evidence="6" ref="3">
    <original>I</original>
    <variation>T</variation>
    <location>
        <position position="215"/>
    </location>
</feature>
<feature type="sequence conflict" description="In Ref. 3; AAH61228." evidence="6" ref="3">
    <original>I</original>
    <variation>V</variation>
    <location>
        <position position="357"/>
    </location>
</feature>
<organism>
    <name type="scientific">Mus musculus</name>
    <name type="common">Mouse</name>
    <dbReference type="NCBI Taxonomy" id="10090"/>
    <lineage>
        <taxon>Eukaryota</taxon>
        <taxon>Metazoa</taxon>
        <taxon>Chordata</taxon>
        <taxon>Craniata</taxon>
        <taxon>Vertebrata</taxon>
        <taxon>Euteleostomi</taxon>
        <taxon>Mammalia</taxon>
        <taxon>Eutheria</taxon>
        <taxon>Euarchontoglires</taxon>
        <taxon>Glires</taxon>
        <taxon>Rodentia</taxon>
        <taxon>Myomorpha</taxon>
        <taxon>Muroidea</taxon>
        <taxon>Muridae</taxon>
        <taxon>Murinae</taxon>
        <taxon>Mus</taxon>
        <taxon>Mus</taxon>
    </lineage>
</organism>
<keyword id="KW-0325">Glycoprotein</keyword>
<keyword id="KW-0433">Leucine-rich repeat</keyword>
<keyword id="KW-0472">Membrane</keyword>
<keyword id="KW-1185">Reference proteome</keyword>
<keyword id="KW-0677">Repeat</keyword>
<keyword id="KW-0732">Signal</keyword>
<keyword id="KW-0812">Transmembrane</keyword>
<keyword id="KW-1133">Transmembrane helix</keyword>
<proteinExistence type="evidence at protein level"/>